<sequence length="94" mass="10531">MSGRFAFNKGLKEVRFLFCQTGEHSAATRSFLLRNYPAMKKDNPATPILIRDASGTLPKVYARFEFGKEKSQSLEGLSDQQIEETVSSLVKNNS</sequence>
<keyword id="KW-0249">Electron transport</keyword>
<keyword id="KW-0472">Membrane</keyword>
<keyword id="KW-0496">Mitochondrion</keyword>
<keyword id="KW-0999">Mitochondrion inner membrane</keyword>
<keyword id="KW-1185">Reference proteome</keyword>
<keyword id="KW-0679">Respiratory chain</keyword>
<keyword id="KW-0813">Transport</keyword>
<name>NDUA2_NEUCR</name>
<gene>
    <name type="primary">nuo-10.5</name>
    <name type="ORF">NCU03156</name>
</gene>
<organism>
    <name type="scientific">Neurospora crassa (strain ATCC 24698 / 74-OR23-1A / CBS 708.71 / DSM 1257 / FGSC 987)</name>
    <dbReference type="NCBI Taxonomy" id="367110"/>
    <lineage>
        <taxon>Eukaryota</taxon>
        <taxon>Fungi</taxon>
        <taxon>Dikarya</taxon>
        <taxon>Ascomycota</taxon>
        <taxon>Pezizomycotina</taxon>
        <taxon>Sordariomycetes</taxon>
        <taxon>Sordariomycetidae</taxon>
        <taxon>Sordariales</taxon>
        <taxon>Sordariaceae</taxon>
        <taxon>Neurospora</taxon>
    </lineage>
</organism>
<feature type="chain" id="PRO_0000118791" description="NADH-ubiquinone oxidoreductase 10.5 kDa subunit">
    <location>
        <begin position="1"/>
        <end position="94"/>
    </location>
</feature>
<accession>Q07842</accession>
<accession>Q7SEX5</accession>
<reference key="1">
    <citation type="journal article" date="1993" name="Biochim. Biophys. Acta">
        <title>Primary structure of the nuclear-encoded 10.5 kDa subunit of complex I from Neurospora crassa.</title>
        <authorList>
            <person name="Duarte M."/>
            <person name="Belo J.A."/>
            <person name="Videira A."/>
        </authorList>
    </citation>
    <scope>NUCLEOTIDE SEQUENCE [MRNA]</scope>
</reference>
<reference key="2">
    <citation type="journal article" date="2003" name="Nature">
        <title>The genome sequence of the filamentous fungus Neurospora crassa.</title>
        <authorList>
            <person name="Galagan J.E."/>
            <person name="Calvo S.E."/>
            <person name="Borkovich K.A."/>
            <person name="Selker E.U."/>
            <person name="Read N.D."/>
            <person name="Jaffe D.B."/>
            <person name="FitzHugh W."/>
            <person name="Ma L.-J."/>
            <person name="Smirnov S."/>
            <person name="Purcell S."/>
            <person name="Rehman B."/>
            <person name="Elkins T."/>
            <person name="Engels R."/>
            <person name="Wang S."/>
            <person name="Nielsen C.B."/>
            <person name="Butler J."/>
            <person name="Endrizzi M."/>
            <person name="Qui D."/>
            <person name="Ianakiev P."/>
            <person name="Bell-Pedersen D."/>
            <person name="Nelson M.A."/>
            <person name="Werner-Washburne M."/>
            <person name="Selitrennikoff C.P."/>
            <person name="Kinsey J.A."/>
            <person name="Braun E.L."/>
            <person name="Zelter A."/>
            <person name="Schulte U."/>
            <person name="Kothe G.O."/>
            <person name="Jedd G."/>
            <person name="Mewes H.-W."/>
            <person name="Staben C."/>
            <person name="Marcotte E."/>
            <person name="Greenberg D."/>
            <person name="Roy A."/>
            <person name="Foley K."/>
            <person name="Naylor J."/>
            <person name="Stange-Thomann N."/>
            <person name="Barrett R."/>
            <person name="Gnerre S."/>
            <person name="Kamal M."/>
            <person name="Kamvysselis M."/>
            <person name="Mauceli E.W."/>
            <person name="Bielke C."/>
            <person name="Rudd S."/>
            <person name="Frishman D."/>
            <person name="Krystofova S."/>
            <person name="Rasmussen C."/>
            <person name="Metzenberg R.L."/>
            <person name="Perkins D.D."/>
            <person name="Kroken S."/>
            <person name="Cogoni C."/>
            <person name="Macino G."/>
            <person name="Catcheside D.E.A."/>
            <person name="Li W."/>
            <person name="Pratt R.J."/>
            <person name="Osmani S.A."/>
            <person name="DeSouza C.P.C."/>
            <person name="Glass N.L."/>
            <person name="Orbach M.J."/>
            <person name="Berglund J.A."/>
            <person name="Voelker R."/>
            <person name="Yarden O."/>
            <person name="Plamann M."/>
            <person name="Seiler S."/>
            <person name="Dunlap J.C."/>
            <person name="Radford A."/>
            <person name="Aramayo R."/>
            <person name="Natvig D.O."/>
            <person name="Alex L.A."/>
            <person name="Mannhaupt G."/>
            <person name="Ebbole D.J."/>
            <person name="Freitag M."/>
            <person name="Paulsen I."/>
            <person name="Sachs M.S."/>
            <person name="Lander E.S."/>
            <person name="Nusbaum C."/>
            <person name="Birren B.W."/>
        </authorList>
    </citation>
    <scope>NUCLEOTIDE SEQUENCE [LARGE SCALE GENOMIC DNA]</scope>
    <source>
        <strain>ATCC 24698 / 74-OR23-1A / CBS 708.71 / DSM 1257 / FGSC 987</strain>
    </source>
</reference>
<protein>
    <recommendedName>
        <fullName>NADH-ubiquinone oxidoreductase 10.5 kDa subunit</fullName>
    </recommendedName>
    <alternativeName>
        <fullName>Complex I</fullName>
        <shortName>CI</shortName>
    </alternativeName>
</protein>
<evidence type="ECO:0000305" key="1"/>
<proteinExistence type="inferred from homology"/>
<comment type="function">
    <text>Accessory subunit of the mitochondrial membrane respiratory chain NADH dehydrogenase (Complex I), that is believed not to be involved in catalysis. Complex I functions in the transfer of electrons from NADH to the respiratory chain. The immediate electron acceptor for the enzyme is believed to be ubiquinone.</text>
</comment>
<comment type="subunit">
    <text>Complex I is composed of about 40 different subunits.</text>
</comment>
<comment type="subcellular location">
    <subcellularLocation>
        <location>Mitochondrion inner membrane</location>
        <topology>Peripheral membrane protein</topology>
        <orientation>Matrix side</orientation>
    </subcellularLocation>
</comment>
<comment type="similarity">
    <text evidence="1">Belongs to the complex I NDUFA2 subunit family.</text>
</comment>
<dbReference type="EMBL" id="X69929">
    <property type="protein sequence ID" value="CAA49549.1"/>
    <property type="molecule type" value="mRNA"/>
</dbReference>
<dbReference type="EMBL" id="CM002236">
    <property type="protein sequence ID" value="EAA35326.1"/>
    <property type="molecule type" value="Genomic_DNA"/>
</dbReference>
<dbReference type="PIR" id="S30186">
    <property type="entry name" value="S30186"/>
</dbReference>
<dbReference type="SMR" id="Q07842"/>
<dbReference type="STRING" id="367110.Q07842"/>
<dbReference type="TCDB" id="3.D.1.6.2">
    <property type="family name" value="the h+ or na+-translocating nadh dehydrogenase (ndh) family"/>
</dbReference>
<dbReference type="PaxDb" id="5141-EFNCRP00000002938"/>
<dbReference type="EnsemblFungi" id="EAA35326">
    <property type="protein sequence ID" value="EAA35326"/>
    <property type="gene ID" value="NCU03156"/>
</dbReference>
<dbReference type="KEGG" id="ncr:NCU03156"/>
<dbReference type="VEuPathDB" id="FungiDB:NCU03156"/>
<dbReference type="HOGENOM" id="CLU_110897_1_0_1"/>
<dbReference type="InParanoid" id="Q07842"/>
<dbReference type="OMA" id="FIEQQYV"/>
<dbReference type="OrthoDB" id="10250268at2759"/>
<dbReference type="Proteomes" id="UP000001805">
    <property type="component" value="Chromosome 1, Linkage Group I"/>
</dbReference>
<dbReference type="GO" id="GO:0005743">
    <property type="term" value="C:mitochondrial inner membrane"/>
    <property type="evidence" value="ECO:0007669"/>
    <property type="project" value="UniProtKB-SubCell"/>
</dbReference>
<dbReference type="GO" id="GO:0045271">
    <property type="term" value="C:respiratory chain complex I"/>
    <property type="evidence" value="ECO:0000318"/>
    <property type="project" value="GO_Central"/>
</dbReference>
<dbReference type="FunFam" id="3.40.30.10:FF:000219">
    <property type="entry name" value="NADH-ubiquinone oxidoreductase 10.5 kDa subunit"/>
    <property type="match status" value="1"/>
</dbReference>
<dbReference type="Gene3D" id="3.40.30.10">
    <property type="entry name" value="Glutaredoxin"/>
    <property type="match status" value="1"/>
</dbReference>
<dbReference type="InterPro" id="IPR016464">
    <property type="entry name" value="NADH_Ub_cplx-1_asu_su-2"/>
</dbReference>
<dbReference type="InterPro" id="IPR007741">
    <property type="entry name" value="Ribosomal_mL43/mS25/NADH_DH"/>
</dbReference>
<dbReference type="InterPro" id="IPR036249">
    <property type="entry name" value="Thioredoxin-like_sf"/>
</dbReference>
<dbReference type="PANTHER" id="PTHR12878:SF0">
    <property type="entry name" value="NADH DEHYDROGENASE [UBIQUINONE] 1 ALPHA SUBCOMPLEX SUBUNIT 2"/>
    <property type="match status" value="1"/>
</dbReference>
<dbReference type="PANTHER" id="PTHR12878">
    <property type="entry name" value="NADH-UBIQUINONE OXIDOREDUCTASE B8 SUBUNIT"/>
    <property type="match status" value="1"/>
</dbReference>
<dbReference type="Pfam" id="PF05047">
    <property type="entry name" value="L51_S25_CI-B8"/>
    <property type="match status" value="1"/>
</dbReference>
<dbReference type="PIRSF" id="PIRSF005822">
    <property type="entry name" value="NDUA2"/>
    <property type="match status" value="1"/>
</dbReference>
<dbReference type="SMART" id="SM00916">
    <property type="entry name" value="L51_S25_CI-B8"/>
    <property type="match status" value="1"/>
</dbReference>
<dbReference type="SUPFAM" id="SSF52833">
    <property type="entry name" value="Thioredoxin-like"/>
    <property type="match status" value="1"/>
</dbReference>